<sequence>MRKIRVVVIDDSAYSRRAITKMLESMPEVEVIGYATDGEEGIRKIIDLKPDLVTLDLEMPRMDGFTLLRIVMEYSPTAVIVISSRSEDEKVFRALELGAVDFVAKPTKGVSEEILTIREDLHRKVRGVIHLNLAGIVRREREQERASVAAGRRTSGSAPYAKAAVRTESTAPRPAGRLEVVAIGASTGGPPALQRILCALPGAFPQAVVVSQHMPAGFTRTFAERLNRLSPLEICEAADGDEVRAGRVLIAPGGHNMVFERQGSEVRARIVKPGTDDRYVPSVDAMLLSCAEVFGPRTLGVVLTGMGNDGSKGVAAINRAGGQTLAEAEETAVVFGMPKEAIATGVVDKIVSLDRMSREIIQRCGLLSDVD</sequence>
<protein>
    <recommendedName>
        <fullName evidence="1">Protein-glutamate methylesterase/protein-glutamine glutaminase 3</fullName>
        <ecNumber evidence="1">3.1.1.61</ecNumber>
        <ecNumber evidence="1">3.5.1.44</ecNumber>
    </recommendedName>
</protein>
<evidence type="ECO:0000255" key="1">
    <source>
        <dbReference type="HAMAP-Rule" id="MF_00099"/>
    </source>
</evidence>
<organism>
    <name type="scientific">Geobacter sulfurreducens (strain ATCC 51573 / DSM 12127 / PCA)</name>
    <dbReference type="NCBI Taxonomy" id="243231"/>
    <lineage>
        <taxon>Bacteria</taxon>
        <taxon>Pseudomonadati</taxon>
        <taxon>Thermodesulfobacteriota</taxon>
        <taxon>Desulfuromonadia</taxon>
        <taxon>Geobacterales</taxon>
        <taxon>Geobacteraceae</taxon>
        <taxon>Geobacter</taxon>
    </lineage>
</organism>
<feature type="chain" id="PRO_0000157998" description="Protein-glutamate methylesterase/protein-glutamine glutaminase 3">
    <location>
        <begin position="1"/>
        <end position="371"/>
    </location>
</feature>
<feature type="domain" description="Response regulatory" evidence="1">
    <location>
        <begin position="5"/>
        <end position="120"/>
    </location>
</feature>
<feature type="domain" description="CheB-type methylesterase" evidence="1">
    <location>
        <begin position="174"/>
        <end position="362"/>
    </location>
</feature>
<feature type="active site" evidence="1">
    <location>
        <position position="186"/>
    </location>
</feature>
<feature type="active site" evidence="1">
    <location>
        <position position="213"/>
    </location>
</feature>
<feature type="active site" evidence="1">
    <location>
        <position position="309"/>
    </location>
</feature>
<feature type="modified residue" description="4-aspartylphosphate" evidence="1">
    <location>
        <position position="56"/>
    </location>
</feature>
<reference key="1">
    <citation type="journal article" date="2003" name="Science">
        <title>Genome of Geobacter sulfurreducens: metal reduction in subsurface environments.</title>
        <authorList>
            <person name="Methe B.A."/>
            <person name="Nelson K.E."/>
            <person name="Eisen J.A."/>
            <person name="Paulsen I.T."/>
            <person name="Nelson W.C."/>
            <person name="Heidelberg J.F."/>
            <person name="Wu D."/>
            <person name="Wu M."/>
            <person name="Ward N.L."/>
            <person name="Beanan M.J."/>
            <person name="Dodson R.J."/>
            <person name="Madupu R."/>
            <person name="Brinkac L.M."/>
            <person name="Daugherty S.C."/>
            <person name="DeBoy R.T."/>
            <person name="Durkin A.S."/>
            <person name="Gwinn M.L."/>
            <person name="Kolonay J.F."/>
            <person name="Sullivan S.A."/>
            <person name="Haft D.H."/>
            <person name="Selengut J."/>
            <person name="Davidsen T.M."/>
            <person name="Zafar N."/>
            <person name="White O."/>
            <person name="Tran B."/>
            <person name="Romero C."/>
            <person name="Forberger H.A."/>
            <person name="Weidman J.F."/>
            <person name="Khouri H.M."/>
            <person name="Feldblyum T.V."/>
            <person name="Utterback T.R."/>
            <person name="Van Aken S.E."/>
            <person name="Lovley D.R."/>
            <person name="Fraser C.M."/>
        </authorList>
    </citation>
    <scope>NUCLEOTIDE SEQUENCE [LARGE SCALE GENOMIC DNA]</scope>
    <source>
        <strain>ATCC 51573 / DSM 12127 / PCA</strain>
    </source>
</reference>
<proteinExistence type="inferred from homology"/>
<gene>
    <name evidence="1" type="primary">cheB3</name>
    <name type="ordered locus">GSU2214</name>
</gene>
<name>CHEB3_GEOSL</name>
<dbReference type="EC" id="3.1.1.61" evidence="1"/>
<dbReference type="EC" id="3.5.1.44" evidence="1"/>
<dbReference type="EMBL" id="AE017180">
    <property type="protein sequence ID" value="AAR35590.1"/>
    <property type="molecule type" value="Genomic_DNA"/>
</dbReference>
<dbReference type="RefSeq" id="NP_953263.1">
    <property type="nucleotide sequence ID" value="NC_002939.5"/>
</dbReference>
<dbReference type="RefSeq" id="WP_010942854.1">
    <property type="nucleotide sequence ID" value="NC_002939.5"/>
</dbReference>
<dbReference type="SMR" id="P62640"/>
<dbReference type="STRING" id="243231.GSU2214"/>
<dbReference type="EnsemblBacteria" id="AAR35590">
    <property type="protein sequence ID" value="AAR35590"/>
    <property type="gene ID" value="GSU2214"/>
</dbReference>
<dbReference type="KEGG" id="gsu:GSU2214"/>
<dbReference type="PATRIC" id="fig|243231.5.peg.2245"/>
<dbReference type="eggNOG" id="COG2201">
    <property type="taxonomic scope" value="Bacteria"/>
</dbReference>
<dbReference type="HOGENOM" id="CLU_000445_51_0_7"/>
<dbReference type="InParanoid" id="P62640"/>
<dbReference type="OrthoDB" id="9793421at2"/>
<dbReference type="Proteomes" id="UP000000577">
    <property type="component" value="Chromosome"/>
</dbReference>
<dbReference type="GO" id="GO:0005737">
    <property type="term" value="C:cytoplasm"/>
    <property type="evidence" value="ECO:0007669"/>
    <property type="project" value="UniProtKB-SubCell"/>
</dbReference>
<dbReference type="GO" id="GO:0000156">
    <property type="term" value="F:phosphorelay response regulator activity"/>
    <property type="evidence" value="ECO:0007669"/>
    <property type="project" value="InterPro"/>
</dbReference>
<dbReference type="GO" id="GO:0008984">
    <property type="term" value="F:protein-glutamate methylesterase activity"/>
    <property type="evidence" value="ECO:0007669"/>
    <property type="project" value="UniProtKB-UniRule"/>
</dbReference>
<dbReference type="GO" id="GO:0050568">
    <property type="term" value="F:protein-glutamine glutaminase activity"/>
    <property type="evidence" value="ECO:0007669"/>
    <property type="project" value="UniProtKB-UniRule"/>
</dbReference>
<dbReference type="GO" id="GO:0006935">
    <property type="term" value="P:chemotaxis"/>
    <property type="evidence" value="ECO:0007669"/>
    <property type="project" value="UniProtKB-UniRule"/>
</dbReference>
<dbReference type="CDD" id="cd16432">
    <property type="entry name" value="CheB_Rec"/>
    <property type="match status" value="1"/>
</dbReference>
<dbReference type="CDD" id="cd17541">
    <property type="entry name" value="REC_CheB-like"/>
    <property type="match status" value="1"/>
</dbReference>
<dbReference type="Gene3D" id="3.40.50.2300">
    <property type="match status" value="1"/>
</dbReference>
<dbReference type="Gene3D" id="3.40.50.180">
    <property type="entry name" value="Methylesterase CheB, C-terminal domain"/>
    <property type="match status" value="1"/>
</dbReference>
<dbReference type="HAMAP" id="MF_00099">
    <property type="entry name" value="CheB_chemtxs"/>
    <property type="match status" value="1"/>
</dbReference>
<dbReference type="InterPro" id="IPR008248">
    <property type="entry name" value="CheB-like"/>
</dbReference>
<dbReference type="InterPro" id="IPR035909">
    <property type="entry name" value="CheB_C"/>
</dbReference>
<dbReference type="InterPro" id="IPR011006">
    <property type="entry name" value="CheY-like_superfamily"/>
</dbReference>
<dbReference type="InterPro" id="IPR000673">
    <property type="entry name" value="Sig_transdc_resp-reg_Me-estase"/>
</dbReference>
<dbReference type="InterPro" id="IPR001789">
    <property type="entry name" value="Sig_transdc_resp-reg_receiver"/>
</dbReference>
<dbReference type="NCBIfam" id="NF001965">
    <property type="entry name" value="PRK00742.1"/>
    <property type="match status" value="1"/>
</dbReference>
<dbReference type="PANTHER" id="PTHR42872">
    <property type="entry name" value="PROTEIN-GLUTAMATE METHYLESTERASE/PROTEIN-GLUTAMINE GLUTAMINASE"/>
    <property type="match status" value="1"/>
</dbReference>
<dbReference type="PANTHER" id="PTHR42872:SF6">
    <property type="entry name" value="PROTEIN-GLUTAMATE METHYLESTERASE_PROTEIN-GLUTAMINE GLUTAMINASE"/>
    <property type="match status" value="1"/>
</dbReference>
<dbReference type="Pfam" id="PF01339">
    <property type="entry name" value="CheB_methylest"/>
    <property type="match status" value="1"/>
</dbReference>
<dbReference type="Pfam" id="PF00072">
    <property type="entry name" value="Response_reg"/>
    <property type="match status" value="1"/>
</dbReference>
<dbReference type="PIRSF" id="PIRSF000876">
    <property type="entry name" value="RR_chemtxs_CheB"/>
    <property type="match status" value="1"/>
</dbReference>
<dbReference type="SMART" id="SM00448">
    <property type="entry name" value="REC"/>
    <property type="match status" value="1"/>
</dbReference>
<dbReference type="SUPFAM" id="SSF52172">
    <property type="entry name" value="CheY-like"/>
    <property type="match status" value="1"/>
</dbReference>
<dbReference type="SUPFAM" id="SSF52738">
    <property type="entry name" value="Methylesterase CheB, C-terminal domain"/>
    <property type="match status" value="1"/>
</dbReference>
<dbReference type="PROSITE" id="PS50122">
    <property type="entry name" value="CHEB"/>
    <property type="match status" value="1"/>
</dbReference>
<dbReference type="PROSITE" id="PS50110">
    <property type="entry name" value="RESPONSE_REGULATORY"/>
    <property type="match status" value="1"/>
</dbReference>
<comment type="function">
    <text evidence="1">Involved in chemotaxis. Part of a chemotaxis signal transduction system that modulates chemotaxis in response to various stimuli. Catalyzes the demethylation of specific methylglutamate residues introduced into the chemoreceptors (methyl-accepting chemotaxis proteins or MCP) by CheR. Also mediates the irreversible deamidation of specific glutamine residues to glutamic acid.</text>
</comment>
<comment type="catalytic activity">
    <reaction evidence="1">
        <text>[protein]-L-glutamate 5-O-methyl ester + H2O = L-glutamyl-[protein] + methanol + H(+)</text>
        <dbReference type="Rhea" id="RHEA:23236"/>
        <dbReference type="Rhea" id="RHEA-COMP:10208"/>
        <dbReference type="Rhea" id="RHEA-COMP:10311"/>
        <dbReference type="ChEBI" id="CHEBI:15377"/>
        <dbReference type="ChEBI" id="CHEBI:15378"/>
        <dbReference type="ChEBI" id="CHEBI:17790"/>
        <dbReference type="ChEBI" id="CHEBI:29973"/>
        <dbReference type="ChEBI" id="CHEBI:82795"/>
        <dbReference type="EC" id="3.1.1.61"/>
    </reaction>
</comment>
<comment type="catalytic activity">
    <reaction evidence="1">
        <text>L-glutaminyl-[protein] + H2O = L-glutamyl-[protein] + NH4(+)</text>
        <dbReference type="Rhea" id="RHEA:16441"/>
        <dbReference type="Rhea" id="RHEA-COMP:10207"/>
        <dbReference type="Rhea" id="RHEA-COMP:10208"/>
        <dbReference type="ChEBI" id="CHEBI:15377"/>
        <dbReference type="ChEBI" id="CHEBI:28938"/>
        <dbReference type="ChEBI" id="CHEBI:29973"/>
        <dbReference type="ChEBI" id="CHEBI:30011"/>
        <dbReference type="EC" id="3.5.1.44"/>
    </reaction>
</comment>
<comment type="subcellular location">
    <subcellularLocation>
        <location evidence="1">Cytoplasm</location>
    </subcellularLocation>
</comment>
<comment type="domain">
    <text evidence="1">Contains a C-terminal catalytic domain, and an N-terminal region which modulates catalytic activity.</text>
</comment>
<comment type="PTM">
    <text evidence="1">Phosphorylated by CheA. Phosphorylation of the N-terminal regulatory domain activates the methylesterase activity.</text>
</comment>
<comment type="similarity">
    <text evidence="1">Belongs to the CheB family.</text>
</comment>
<accession>P62640</accession>
<accession>Q74AY5</accession>
<keyword id="KW-0145">Chemotaxis</keyword>
<keyword id="KW-0963">Cytoplasm</keyword>
<keyword id="KW-0378">Hydrolase</keyword>
<keyword id="KW-0597">Phosphoprotein</keyword>
<keyword id="KW-1185">Reference proteome</keyword>